<keyword id="KW-0131">Cell cycle</keyword>
<keyword id="KW-0132">Cell division</keyword>
<keyword id="KW-0997">Cell inner membrane</keyword>
<keyword id="KW-1003">Cell membrane</keyword>
<keyword id="KW-0133">Cell shape</keyword>
<keyword id="KW-0961">Cell wall biogenesis/degradation</keyword>
<keyword id="KW-0328">Glycosyltransferase</keyword>
<keyword id="KW-0472">Membrane</keyword>
<keyword id="KW-0573">Peptidoglycan synthesis</keyword>
<keyword id="KW-1185">Reference proteome</keyword>
<keyword id="KW-0808">Transferase</keyword>
<feature type="chain" id="PRO_1000192122" description="UDP-N-acetylglucosamine--N-acetylmuramyl-(pentapeptide) pyrophosphoryl-undecaprenol N-acetylglucosamine transferase">
    <location>
        <begin position="1"/>
        <end position="361"/>
    </location>
</feature>
<feature type="binding site" evidence="1">
    <location>
        <begin position="12"/>
        <end position="14"/>
    </location>
    <ligand>
        <name>UDP-N-acetyl-alpha-D-glucosamine</name>
        <dbReference type="ChEBI" id="CHEBI:57705"/>
    </ligand>
</feature>
<feature type="binding site" evidence="1">
    <location>
        <position position="123"/>
    </location>
    <ligand>
        <name>UDP-N-acetyl-alpha-D-glucosamine</name>
        <dbReference type="ChEBI" id="CHEBI:57705"/>
    </ligand>
</feature>
<feature type="binding site" evidence="1">
    <location>
        <position position="166"/>
    </location>
    <ligand>
        <name>UDP-N-acetyl-alpha-D-glucosamine</name>
        <dbReference type="ChEBI" id="CHEBI:57705"/>
    </ligand>
</feature>
<feature type="binding site" evidence="1">
    <location>
        <position position="192"/>
    </location>
    <ligand>
        <name>UDP-N-acetyl-alpha-D-glucosamine</name>
        <dbReference type="ChEBI" id="CHEBI:57705"/>
    </ligand>
</feature>
<feature type="binding site" evidence="1">
    <location>
        <position position="293"/>
    </location>
    <ligand>
        <name>UDP-N-acetyl-alpha-D-glucosamine</name>
        <dbReference type="ChEBI" id="CHEBI:57705"/>
    </ligand>
</feature>
<gene>
    <name evidence="1" type="primary">murG</name>
    <name type="ordered locus">CCNA_02634</name>
</gene>
<proteinExistence type="inferred from homology"/>
<dbReference type="EC" id="2.4.1.227" evidence="1"/>
<dbReference type="EMBL" id="CP001340">
    <property type="protein sequence ID" value="ACL96099.1"/>
    <property type="molecule type" value="Genomic_DNA"/>
</dbReference>
<dbReference type="RefSeq" id="WP_010920408.1">
    <property type="nucleotide sequence ID" value="NC_011916.1"/>
</dbReference>
<dbReference type="RefSeq" id="YP_002518007.1">
    <property type="nucleotide sequence ID" value="NC_011916.1"/>
</dbReference>
<dbReference type="SMR" id="B8H091"/>
<dbReference type="CAZy" id="GT28">
    <property type="family name" value="Glycosyltransferase Family 28"/>
</dbReference>
<dbReference type="GeneID" id="7332736"/>
<dbReference type="KEGG" id="ccs:CCNA_02634"/>
<dbReference type="PATRIC" id="fig|565050.3.peg.2582"/>
<dbReference type="HOGENOM" id="CLU_037404_2_1_5"/>
<dbReference type="OrthoDB" id="9808936at2"/>
<dbReference type="PhylomeDB" id="B8H091"/>
<dbReference type="UniPathway" id="UPA00219"/>
<dbReference type="Proteomes" id="UP000001364">
    <property type="component" value="Chromosome"/>
</dbReference>
<dbReference type="GO" id="GO:0005886">
    <property type="term" value="C:plasma membrane"/>
    <property type="evidence" value="ECO:0007669"/>
    <property type="project" value="UniProtKB-SubCell"/>
</dbReference>
<dbReference type="GO" id="GO:0051991">
    <property type="term" value="F:UDP-N-acetyl-D-glucosamine:N-acetylmuramoyl-L-alanyl-D-glutamyl-meso-2,6-diaminopimelyl-D-alanyl-D-alanine-diphosphoundecaprenol 4-beta-N-acetylglucosaminlytransferase activity"/>
    <property type="evidence" value="ECO:0007669"/>
    <property type="project" value="RHEA"/>
</dbReference>
<dbReference type="GO" id="GO:0050511">
    <property type="term" value="F:undecaprenyldiphospho-muramoylpentapeptide beta-N-acetylglucosaminyltransferase activity"/>
    <property type="evidence" value="ECO:0007669"/>
    <property type="project" value="UniProtKB-UniRule"/>
</dbReference>
<dbReference type="GO" id="GO:0005975">
    <property type="term" value="P:carbohydrate metabolic process"/>
    <property type="evidence" value="ECO:0007669"/>
    <property type="project" value="InterPro"/>
</dbReference>
<dbReference type="GO" id="GO:0051301">
    <property type="term" value="P:cell division"/>
    <property type="evidence" value="ECO:0007669"/>
    <property type="project" value="UniProtKB-KW"/>
</dbReference>
<dbReference type="GO" id="GO:0071555">
    <property type="term" value="P:cell wall organization"/>
    <property type="evidence" value="ECO:0007669"/>
    <property type="project" value="UniProtKB-KW"/>
</dbReference>
<dbReference type="GO" id="GO:0030259">
    <property type="term" value="P:lipid glycosylation"/>
    <property type="evidence" value="ECO:0007669"/>
    <property type="project" value="UniProtKB-UniRule"/>
</dbReference>
<dbReference type="GO" id="GO:0009252">
    <property type="term" value="P:peptidoglycan biosynthetic process"/>
    <property type="evidence" value="ECO:0007669"/>
    <property type="project" value="UniProtKB-UniRule"/>
</dbReference>
<dbReference type="GO" id="GO:0008360">
    <property type="term" value="P:regulation of cell shape"/>
    <property type="evidence" value="ECO:0007669"/>
    <property type="project" value="UniProtKB-KW"/>
</dbReference>
<dbReference type="CDD" id="cd03785">
    <property type="entry name" value="GT28_MurG"/>
    <property type="match status" value="1"/>
</dbReference>
<dbReference type="Gene3D" id="3.40.50.2000">
    <property type="entry name" value="Glycogen Phosphorylase B"/>
    <property type="match status" value="2"/>
</dbReference>
<dbReference type="HAMAP" id="MF_00033">
    <property type="entry name" value="MurG"/>
    <property type="match status" value="1"/>
</dbReference>
<dbReference type="InterPro" id="IPR006009">
    <property type="entry name" value="GlcNAc_MurG"/>
</dbReference>
<dbReference type="InterPro" id="IPR007235">
    <property type="entry name" value="Glyco_trans_28_C"/>
</dbReference>
<dbReference type="InterPro" id="IPR004276">
    <property type="entry name" value="GlycoTrans_28_N"/>
</dbReference>
<dbReference type="NCBIfam" id="TIGR01133">
    <property type="entry name" value="murG"/>
    <property type="match status" value="1"/>
</dbReference>
<dbReference type="PANTHER" id="PTHR21015:SF22">
    <property type="entry name" value="GLYCOSYLTRANSFERASE"/>
    <property type="match status" value="1"/>
</dbReference>
<dbReference type="PANTHER" id="PTHR21015">
    <property type="entry name" value="UDP-N-ACETYLGLUCOSAMINE--N-ACETYLMURAMYL-(PENTAPEPTIDE) PYROPHOSPHORYL-UNDECAPRENOL N-ACETYLGLUCOSAMINE TRANSFERASE 1"/>
    <property type="match status" value="1"/>
</dbReference>
<dbReference type="Pfam" id="PF04101">
    <property type="entry name" value="Glyco_tran_28_C"/>
    <property type="match status" value="1"/>
</dbReference>
<dbReference type="Pfam" id="PF03033">
    <property type="entry name" value="Glyco_transf_28"/>
    <property type="match status" value="1"/>
</dbReference>
<dbReference type="SUPFAM" id="SSF53756">
    <property type="entry name" value="UDP-Glycosyltransferase/glycogen phosphorylase"/>
    <property type="match status" value="1"/>
</dbReference>
<evidence type="ECO:0000255" key="1">
    <source>
        <dbReference type="HAMAP-Rule" id="MF_00033"/>
    </source>
</evidence>
<reference key="1">
    <citation type="journal article" date="2010" name="J. Bacteriol.">
        <title>The genetic basis of laboratory adaptation in Caulobacter crescentus.</title>
        <authorList>
            <person name="Marks M.E."/>
            <person name="Castro-Rojas C.M."/>
            <person name="Teiling C."/>
            <person name="Du L."/>
            <person name="Kapatral V."/>
            <person name="Walunas T.L."/>
            <person name="Crosson S."/>
        </authorList>
    </citation>
    <scope>NUCLEOTIDE SEQUENCE [LARGE SCALE GENOMIC DNA]</scope>
    <source>
        <strain>NA1000 / CB15N</strain>
    </source>
</reference>
<comment type="function">
    <text evidence="1">Cell wall formation. Catalyzes the transfer of a GlcNAc subunit on undecaprenyl-pyrophosphoryl-MurNAc-pentapeptide (lipid intermediate I) to form undecaprenyl-pyrophosphoryl-MurNAc-(pentapeptide)GlcNAc (lipid intermediate II).</text>
</comment>
<comment type="catalytic activity">
    <reaction evidence="1">
        <text>di-trans,octa-cis-undecaprenyl diphospho-N-acetyl-alpha-D-muramoyl-L-alanyl-D-glutamyl-meso-2,6-diaminopimeloyl-D-alanyl-D-alanine + UDP-N-acetyl-alpha-D-glucosamine = di-trans,octa-cis-undecaprenyl diphospho-[N-acetyl-alpha-D-glucosaminyl-(1-&gt;4)]-N-acetyl-alpha-D-muramoyl-L-alanyl-D-glutamyl-meso-2,6-diaminopimeloyl-D-alanyl-D-alanine + UDP + H(+)</text>
        <dbReference type="Rhea" id="RHEA:31227"/>
        <dbReference type="ChEBI" id="CHEBI:15378"/>
        <dbReference type="ChEBI" id="CHEBI:57705"/>
        <dbReference type="ChEBI" id="CHEBI:58223"/>
        <dbReference type="ChEBI" id="CHEBI:61387"/>
        <dbReference type="ChEBI" id="CHEBI:61388"/>
        <dbReference type="EC" id="2.4.1.227"/>
    </reaction>
</comment>
<comment type="pathway">
    <text evidence="1">Cell wall biogenesis; peptidoglycan biosynthesis.</text>
</comment>
<comment type="subcellular location">
    <subcellularLocation>
        <location evidence="1">Cell inner membrane</location>
        <topology evidence="1">Peripheral membrane protein</topology>
        <orientation evidence="1">Cytoplasmic side</orientation>
    </subcellularLocation>
</comment>
<comment type="similarity">
    <text evidence="1">Belongs to the glycosyltransferase 28 family. MurG subfamily.</text>
</comment>
<protein>
    <recommendedName>
        <fullName evidence="1">UDP-N-acetylglucosamine--N-acetylmuramyl-(pentapeptide) pyrophosphoryl-undecaprenol N-acetylglucosamine transferase</fullName>
        <ecNumber evidence="1">2.4.1.227</ecNumber>
    </recommendedName>
    <alternativeName>
        <fullName evidence="1">Undecaprenyl-PP-MurNAc-pentapeptide-UDPGlcNAc GlcNAc transferase</fullName>
    </alternativeName>
</protein>
<sequence>MSKLAVVAAGGTGGHMFPAQALAEALAARGWRVVLATDDRGALYADKFPAEERLALSAATAKSNDPLGMIKAGFVVLQGVMEARAAFKRLDPAVVVGFGGYPALPALLGALSQGRPTVIHEQNAVLGRVNRFLAPRVNEVACAFPILEKATPAVKACAHVVGNPVRPPVRALFDVPYLAPEVQLRVLVTGGSQGARLLSELIPEAVAKLPEEMRGRLKVFQQARAESMEQARKVYRNAMVECEVAPFFRDMAGYLRQSHLVIGRSGASTCTELAVAGRPSILIPLKIAADDHQRFNARLLEEAGGAAVCLEDELTVDVMAAALKALLSKPERLEKMAAGARSAAKPNAAEELADLVEKTAR</sequence>
<name>MURG_CAUVN</name>
<accession>B8H091</accession>
<organism>
    <name type="scientific">Caulobacter vibrioides (strain NA1000 / CB15N)</name>
    <name type="common">Caulobacter crescentus</name>
    <dbReference type="NCBI Taxonomy" id="565050"/>
    <lineage>
        <taxon>Bacteria</taxon>
        <taxon>Pseudomonadati</taxon>
        <taxon>Pseudomonadota</taxon>
        <taxon>Alphaproteobacteria</taxon>
        <taxon>Caulobacterales</taxon>
        <taxon>Caulobacteraceae</taxon>
        <taxon>Caulobacter</taxon>
    </lineage>
</organism>